<gene>
    <name evidence="2" type="primary">lysA</name>
    <name type="ordered locus">BQ2027_MB1325</name>
</gene>
<organism>
    <name type="scientific">Mycobacterium bovis (strain ATCC BAA-935 / AF2122/97)</name>
    <dbReference type="NCBI Taxonomy" id="233413"/>
    <lineage>
        <taxon>Bacteria</taxon>
        <taxon>Bacillati</taxon>
        <taxon>Actinomycetota</taxon>
        <taxon>Actinomycetes</taxon>
        <taxon>Mycobacteriales</taxon>
        <taxon>Mycobacteriaceae</taxon>
        <taxon>Mycobacterium</taxon>
        <taxon>Mycobacterium tuberculosis complex</taxon>
    </lineage>
</organism>
<reference key="1">
    <citation type="journal article" date="2003" name="Proc. Natl. Acad. Sci. U.S.A.">
        <title>The complete genome sequence of Mycobacterium bovis.</title>
        <authorList>
            <person name="Garnier T."/>
            <person name="Eiglmeier K."/>
            <person name="Camus J.-C."/>
            <person name="Medina N."/>
            <person name="Mansoor H."/>
            <person name="Pryor M."/>
            <person name="Duthoy S."/>
            <person name="Grondin S."/>
            <person name="Lacroix C."/>
            <person name="Monsempe C."/>
            <person name="Simon S."/>
            <person name="Harris B."/>
            <person name="Atkin R."/>
            <person name="Doggett J."/>
            <person name="Mayes R."/>
            <person name="Keating L."/>
            <person name="Wheeler P.R."/>
            <person name="Parkhill J."/>
            <person name="Barrell B.G."/>
            <person name="Cole S.T."/>
            <person name="Gordon S.V."/>
            <person name="Hewinson R.G."/>
        </authorList>
    </citation>
    <scope>NUCLEOTIDE SEQUENCE [LARGE SCALE GENOMIC DNA]</scope>
    <source>
        <strain>ATCC BAA-935 / AF2122/97</strain>
    </source>
</reference>
<reference key="2">
    <citation type="journal article" date="2017" name="Genome Announc.">
        <title>Updated reference genome sequence and annotation of Mycobacterium bovis AF2122/97.</title>
        <authorList>
            <person name="Malone K.M."/>
            <person name="Farrell D."/>
            <person name="Stuber T.P."/>
            <person name="Schubert O.T."/>
            <person name="Aebersold R."/>
            <person name="Robbe-Austerman S."/>
            <person name="Gordon S.V."/>
        </authorList>
    </citation>
    <scope>NUCLEOTIDE SEQUENCE [LARGE SCALE GENOMIC DNA]</scope>
    <scope>GENOME REANNOTATION</scope>
    <source>
        <strain>ATCC BAA-935 / AF2122/97</strain>
    </source>
</reference>
<accession>P0A5M5</accession>
<accession>A0A1R3XXX4</accession>
<accession>P31848</accession>
<accession>X2BHB0</accession>
<comment type="function">
    <text evidence="2">Specifically catalyzes the decarboxylation of meso-diaminopimelate (meso-DAP) to L-lysine.</text>
</comment>
<comment type="catalytic activity">
    <reaction evidence="2">
        <text>meso-2,6-diaminopimelate + H(+) = L-lysine + CO2</text>
        <dbReference type="Rhea" id="RHEA:15101"/>
        <dbReference type="ChEBI" id="CHEBI:15378"/>
        <dbReference type="ChEBI" id="CHEBI:16526"/>
        <dbReference type="ChEBI" id="CHEBI:32551"/>
        <dbReference type="ChEBI" id="CHEBI:57791"/>
        <dbReference type="EC" id="4.1.1.20"/>
    </reaction>
</comment>
<comment type="cofactor">
    <cofactor evidence="2">
        <name>pyridoxal 5'-phosphate</name>
        <dbReference type="ChEBI" id="CHEBI:597326"/>
    </cofactor>
</comment>
<comment type="pathway">
    <text evidence="2">Amino-acid biosynthesis; L-lysine biosynthesis via DAP pathway; L-lysine from DL-2,6-diaminopimelate: step 1/1.</text>
</comment>
<comment type="subunit">
    <text evidence="2">Homodimer.</text>
</comment>
<comment type="similarity">
    <text evidence="2">Belongs to the Orn/Lys/Arg decarboxylase class-II family. LysA subfamily.</text>
</comment>
<feature type="chain" id="PRO_0000149930" description="Diaminopimelate decarboxylase">
    <location>
        <begin position="1"/>
        <end position="447"/>
    </location>
</feature>
<feature type="active site" description="Proton donor" evidence="1">
    <location>
        <position position="375"/>
    </location>
</feature>
<feature type="binding site" evidence="2">
    <location>
        <position position="258"/>
    </location>
    <ligand>
        <name>pyridoxal 5'-phosphate</name>
        <dbReference type="ChEBI" id="CHEBI:597326"/>
    </ligand>
</feature>
<feature type="binding site" evidence="2">
    <location>
        <begin position="300"/>
        <end position="303"/>
    </location>
    <ligand>
        <name>pyridoxal 5'-phosphate</name>
        <dbReference type="ChEBI" id="CHEBI:597326"/>
    </ligand>
</feature>
<feature type="binding site" evidence="2">
    <location>
        <position position="303"/>
    </location>
    <ligand>
        <name>substrate</name>
    </ligand>
</feature>
<feature type="binding site" evidence="2">
    <location>
        <position position="344"/>
    </location>
    <ligand>
        <name>substrate</name>
    </ligand>
</feature>
<feature type="binding site" evidence="2">
    <location>
        <position position="348"/>
    </location>
    <ligand>
        <name>substrate</name>
    </ligand>
</feature>
<feature type="binding site" evidence="2">
    <location>
        <position position="376"/>
    </location>
    <ligand>
        <name>substrate</name>
    </ligand>
</feature>
<feature type="binding site" evidence="2">
    <location>
        <position position="405"/>
    </location>
    <ligand>
        <name>pyridoxal 5'-phosphate</name>
        <dbReference type="ChEBI" id="CHEBI:597326"/>
    </ligand>
</feature>
<feature type="binding site" evidence="2">
    <location>
        <position position="405"/>
    </location>
    <ligand>
        <name>substrate</name>
    </ligand>
</feature>
<feature type="modified residue" description="N6-(pyridoxal phosphate)lysine" evidence="2">
    <location>
        <position position="72"/>
    </location>
</feature>
<protein>
    <recommendedName>
        <fullName evidence="2">Diaminopimelate decarboxylase</fullName>
        <shortName evidence="2">DAP decarboxylase</shortName>
        <shortName evidence="2">DAPDC</shortName>
        <ecNumber evidence="2">4.1.1.20</ecNumber>
    </recommendedName>
</protein>
<dbReference type="EC" id="4.1.1.20" evidence="2"/>
<dbReference type="EMBL" id="LT708304">
    <property type="protein sequence ID" value="SIT99928.1"/>
    <property type="molecule type" value="Genomic_DNA"/>
</dbReference>
<dbReference type="RefSeq" id="NP_854979.1">
    <property type="nucleotide sequence ID" value="NC_002945.3"/>
</dbReference>
<dbReference type="RefSeq" id="WP_003406632.1">
    <property type="nucleotide sequence ID" value="NC_002945.4"/>
</dbReference>
<dbReference type="SMR" id="P0A5M5"/>
<dbReference type="GeneID" id="45425267"/>
<dbReference type="KEGG" id="mbo:BQ2027_MB1325"/>
<dbReference type="PATRIC" id="fig|233413.5.peg.1451"/>
<dbReference type="UniPathway" id="UPA00034">
    <property type="reaction ID" value="UER00027"/>
</dbReference>
<dbReference type="Proteomes" id="UP000001419">
    <property type="component" value="Chromosome"/>
</dbReference>
<dbReference type="GO" id="GO:0008836">
    <property type="term" value="F:diaminopimelate decarboxylase activity"/>
    <property type="evidence" value="ECO:0007669"/>
    <property type="project" value="UniProtKB-UniRule"/>
</dbReference>
<dbReference type="GO" id="GO:0030170">
    <property type="term" value="F:pyridoxal phosphate binding"/>
    <property type="evidence" value="ECO:0007669"/>
    <property type="project" value="UniProtKB-UniRule"/>
</dbReference>
<dbReference type="GO" id="GO:0009089">
    <property type="term" value="P:lysine biosynthetic process via diaminopimelate"/>
    <property type="evidence" value="ECO:0007669"/>
    <property type="project" value="UniProtKB-UniRule"/>
</dbReference>
<dbReference type="CDD" id="cd06828">
    <property type="entry name" value="PLPDE_III_DapDC"/>
    <property type="match status" value="1"/>
</dbReference>
<dbReference type="FunFam" id="2.40.37.10:FF:000003">
    <property type="entry name" value="Diaminopimelate decarboxylase"/>
    <property type="match status" value="1"/>
</dbReference>
<dbReference type="FunFam" id="3.20.20.10:FF:000003">
    <property type="entry name" value="Diaminopimelate decarboxylase"/>
    <property type="match status" value="1"/>
</dbReference>
<dbReference type="Gene3D" id="3.20.20.10">
    <property type="entry name" value="Alanine racemase"/>
    <property type="match status" value="1"/>
</dbReference>
<dbReference type="Gene3D" id="2.40.37.10">
    <property type="entry name" value="Lyase, Ornithine Decarboxylase, Chain A, domain 1"/>
    <property type="match status" value="1"/>
</dbReference>
<dbReference type="HAMAP" id="MF_02120">
    <property type="entry name" value="LysA"/>
    <property type="match status" value="1"/>
</dbReference>
<dbReference type="InterPro" id="IPR009006">
    <property type="entry name" value="Ala_racemase/Decarboxylase_C"/>
</dbReference>
<dbReference type="InterPro" id="IPR002986">
    <property type="entry name" value="DAP_deCOOHase_LysA"/>
</dbReference>
<dbReference type="InterPro" id="IPR022643">
    <property type="entry name" value="De-COase2_C"/>
</dbReference>
<dbReference type="InterPro" id="IPR022657">
    <property type="entry name" value="De-COase2_CS"/>
</dbReference>
<dbReference type="InterPro" id="IPR022644">
    <property type="entry name" value="De-COase2_N"/>
</dbReference>
<dbReference type="InterPro" id="IPR022653">
    <property type="entry name" value="De-COase2_pyr-phos_BS"/>
</dbReference>
<dbReference type="InterPro" id="IPR000183">
    <property type="entry name" value="Orn/DAP/Arg_de-COase"/>
</dbReference>
<dbReference type="InterPro" id="IPR029066">
    <property type="entry name" value="PLP-binding_barrel"/>
</dbReference>
<dbReference type="NCBIfam" id="TIGR01048">
    <property type="entry name" value="lysA"/>
    <property type="match status" value="1"/>
</dbReference>
<dbReference type="PANTHER" id="PTHR43727">
    <property type="entry name" value="DIAMINOPIMELATE DECARBOXYLASE"/>
    <property type="match status" value="1"/>
</dbReference>
<dbReference type="PANTHER" id="PTHR43727:SF2">
    <property type="entry name" value="GROUP IV DECARBOXYLASE"/>
    <property type="match status" value="1"/>
</dbReference>
<dbReference type="Pfam" id="PF02784">
    <property type="entry name" value="Orn_Arg_deC_N"/>
    <property type="match status" value="1"/>
</dbReference>
<dbReference type="Pfam" id="PF00278">
    <property type="entry name" value="Orn_DAP_Arg_deC"/>
    <property type="match status" value="1"/>
</dbReference>
<dbReference type="PRINTS" id="PR01181">
    <property type="entry name" value="DAPDCRBXLASE"/>
</dbReference>
<dbReference type="PRINTS" id="PR01179">
    <property type="entry name" value="ODADCRBXLASE"/>
</dbReference>
<dbReference type="SUPFAM" id="SSF50621">
    <property type="entry name" value="Alanine racemase C-terminal domain-like"/>
    <property type="match status" value="2"/>
</dbReference>
<dbReference type="SUPFAM" id="SSF51419">
    <property type="entry name" value="PLP-binding barrel"/>
    <property type="match status" value="1"/>
</dbReference>
<dbReference type="PROSITE" id="PS00878">
    <property type="entry name" value="ODR_DC_2_1"/>
    <property type="match status" value="1"/>
</dbReference>
<dbReference type="PROSITE" id="PS00879">
    <property type="entry name" value="ODR_DC_2_2"/>
    <property type="match status" value="1"/>
</dbReference>
<keyword id="KW-0028">Amino-acid biosynthesis</keyword>
<keyword id="KW-0210">Decarboxylase</keyword>
<keyword id="KW-0456">Lyase</keyword>
<keyword id="KW-0457">Lysine biosynthesis</keyword>
<keyword id="KW-0663">Pyridoxal phosphate</keyword>
<keyword id="KW-1185">Reference proteome</keyword>
<name>DCDA_MYCBO</name>
<sequence length="447" mass="47458">MNELLHLAPNVWPRNTTRDEVGVVCIAGIPLTQLAQEYGTPLFVIDEDDFRSRCRETAAAFGSGANVHYAAKAFLCSEVARWISEEGLCLDVCTGGELAVALHASFPPERITLHGNNKSVSELTAAVKAGVGHIVVDSMTEIERLDAIAGEAGIVQDVLVRLTVGVEAHTHEFISTAHEDQKFGLSVASGAAMAAVRRVFATDHLRLVGLHSHIGSQIFDVDGFELAAHRVIGLLRDVVGEFGPEKTAQIATVDLGGGLGISYLPSDDPPPIAELAAKLGTIVSDESTAVGLPTPKLVVEPGRAIAGPGTITLYEVGTVKDVDVSATAHRRYVSVDGGMSDNIRTALYGAQYDVRLVSRVSDAPPVPARLVGKHCESGDIIVRDTWVPDDIRPGDLVAVAATGAYCYSLSSRYNMVGRPAVVAVHAGNARLVLRRETVDDLLSLEVR</sequence>
<proteinExistence type="inferred from homology"/>
<evidence type="ECO:0000255" key="1"/>
<evidence type="ECO:0000255" key="2">
    <source>
        <dbReference type="HAMAP-Rule" id="MF_02120"/>
    </source>
</evidence>